<gene>
    <name type="primary">SDHD</name>
    <name type="synonym">SDH4</name>
</gene>
<keyword id="KW-0249">Electron transport</keyword>
<keyword id="KW-0349">Heme</keyword>
<keyword id="KW-0408">Iron</keyword>
<keyword id="KW-0472">Membrane</keyword>
<keyword id="KW-0479">Metal-binding</keyword>
<keyword id="KW-0496">Mitochondrion</keyword>
<keyword id="KW-0999">Mitochondrion inner membrane</keyword>
<keyword id="KW-1185">Reference proteome</keyword>
<keyword id="KW-0809">Transit peptide</keyword>
<keyword id="KW-0812">Transmembrane</keyword>
<keyword id="KW-1133">Transmembrane helix</keyword>
<keyword id="KW-0813">Transport</keyword>
<keyword id="KW-0816">Tricarboxylic acid cycle</keyword>
<evidence type="ECO:0000250" key="1">
    <source>
        <dbReference type="UniProtKB" id="O14521"/>
    </source>
</evidence>
<evidence type="ECO:0000255" key="2"/>
<evidence type="ECO:0000269" key="3">
    <source>
    </source>
</evidence>
<evidence type="ECO:0000269" key="4">
    <source>
    </source>
</evidence>
<evidence type="ECO:0000305" key="5"/>
<comment type="function">
    <text evidence="1 3 4">Membrane-anchoring subunit of succinate dehydrogenase (SDH) that is involved in complex II of the mitochondrial electron transport chain and is responsible for transferring electrons from succinate to ubiquinone (coenzyme Q) (By similarity). SDH also oxidizes malate to the non-canonical enol form of oxaloacetate, enol-oxaloacetate (PubMed:1864383, PubMed:2902878). Enol-oxaloacetate, which is a potent inhibitor of the succinate dehydrogenase activity, is further isomerized into keto-oxaloacetate (PubMed:2902878).</text>
</comment>
<comment type="pathway">
    <text evidence="1">Carbohydrate metabolism; tricarboxylic acid cycle.</text>
</comment>
<comment type="subunit">
    <text evidence="1">Component of complex II composed of four subunits: the flavoprotein (FP) SDHA, iron-sulfur protein (IP) SDHB, and a cytochrome b560 composed of SDHC and SDHD.</text>
</comment>
<comment type="subcellular location">
    <subcellularLocation>
        <location evidence="1">Mitochondrion inner membrane</location>
        <topology evidence="2">Multi-pass membrane protein</topology>
    </subcellularLocation>
</comment>
<comment type="similarity">
    <text evidence="5">Belongs to the CybS family.</text>
</comment>
<feature type="transit peptide" description="Mitochondrion" evidence="2">
    <location>
        <begin position="1"/>
        <end position="55"/>
    </location>
</feature>
<feature type="chain" id="PRO_0000006486" description="Succinate dehydrogenase [ubiquinone] cytochrome b small subunit, mitochondrial">
    <location>
        <begin position="56"/>
        <end position="158"/>
    </location>
</feature>
<feature type="topological domain" description="Mitochondrial matrix" evidence="1">
    <location>
        <begin position="56"/>
        <end position="62"/>
    </location>
</feature>
<feature type="transmembrane region" description="Helical" evidence="1">
    <location>
        <begin position="63"/>
        <end position="84"/>
    </location>
</feature>
<feature type="topological domain" description="Mitochondrial intermembrane" evidence="1">
    <location>
        <begin position="85"/>
        <end position="89"/>
    </location>
</feature>
<feature type="transmembrane region" description="Helical" evidence="1">
    <location>
        <begin position="90"/>
        <end position="110"/>
    </location>
</feature>
<feature type="topological domain" description="Mitochondrial matrix" evidence="1">
    <location>
        <begin position="111"/>
        <end position="119"/>
    </location>
</feature>
<feature type="transmembrane region" description="Helical" evidence="1">
    <location>
        <begin position="120"/>
        <end position="141"/>
    </location>
</feature>
<feature type="topological domain" description="Mitochondrial intermembrane" evidence="1">
    <location>
        <begin position="142"/>
        <end position="158"/>
    </location>
</feature>
<feature type="binding site" description="axial binding residue" evidence="1">
    <location>
        <position position="101"/>
    </location>
    <ligand>
        <name>heme b</name>
        <dbReference type="ChEBI" id="CHEBI:60344"/>
        <note>ligand shared with SDHC</note>
    </ligand>
    <ligandPart>
        <name>Fe</name>
        <dbReference type="ChEBI" id="CHEBI:18248"/>
    </ligandPart>
</feature>
<feature type="binding site" evidence="1">
    <location>
        <position position="113"/>
    </location>
    <ligand>
        <name>a ubiquinone</name>
        <dbReference type="ChEBI" id="CHEBI:16389"/>
        <note>ligand shared with IP/SDHB</note>
    </ligand>
</feature>
<feature type="sequence conflict" description="In Ref. 3; AAI02258." evidence="5" ref="3">
    <original>A</original>
    <variation>AA</variation>
    <location>
        <position position="2"/>
    </location>
</feature>
<feature type="sequence conflict" description="In Ref. 1; AAB09426." evidence="5" ref="1">
    <original>R</original>
    <variation>K</variation>
    <location>
        <position position="13"/>
    </location>
</feature>
<dbReference type="EMBL" id="U50987">
    <property type="protein sequence ID" value="AAB09426.1"/>
    <property type="molecule type" value="mRNA"/>
</dbReference>
<dbReference type="EMBL" id="AY770191">
    <property type="protein sequence ID" value="AAV41841.1"/>
    <property type="molecule type" value="mRNA"/>
</dbReference>
<dbReference type="EMBL" id="BC102257">
    <property type="protein sequence ID" value="AAI02258.1"/>
    <property type="molecule type" value="mRNA"/>
</dbReference>
<dbReference type="RefSeq" id="NP_776604.1">
    <property type="nucleotide sequence ID" value="NM_174179.2"/>
</dbReference>
<dbReference type="SMR" id="Q95123"/>
<dbReference type="CORUM" id="Q95123"/>
<dbReference type="FunCoup" id="Q95123">
    <property type="interactions" value="1912"/>
</dbReference>
<dbReference type="IntAct" id="Q95123">
    <property type="interactions" value="2"/>
</dbReference>
<dbReference type="STRING" id="9913.ENSBTAP00000021636"/>
<dbReference type="PaxDb" id="9913-ENSBTAP00000021636"/>
<dbReference type="GeneID" id="281481"/>
<dbReference type="KEGG" id="bta:281481"/>
<dbReference type="CTD" id="6392"/>
<dbReference type="eggNOG" id="KOG4097">
    <property type="taxonomic scope" value="Eukaryota"/>
</dbReference>
<dbReference type="InParanoid" id="Q95123"/>
<dbReference type="OrthoDB" id="18577at2759"/>
<dbReference type="TreeFam" id="TF313310"/>
<dbReference type="UniPathway" id="UPA00223"/>
<dbReference type="Proteomes" id="UP000009136">
    <property type="component" value="Unplaced"/>
</dbReference>
<dbReference type="GO" id="GO:0005743">
    <property type="term" value="C:mitochondrial inner membrane"/>
    <property type="evidence" value="ECO:0000250"/>
    <property type="project" value="UniProtKB"/>
</dbReference>
<dbReference type="GO" id="GO:0045273">
    <property type="term" value="C:respiratory chain complex II (succinate dehydrogenase)"/>
    <property type="evidence" value="ECO:0000250"/>
    <property type="project" value="UniProtKB"/>
</dbReference>
<dbReference type="GO" id="GO:0020037">
    <property type="term" value="F:heme binding"/>
    <property type="evidence" value="ECO:0000250"/>
    <property type="project" value="UniProtKB"/>
</dbReference>
<dbReference type="GO" id="GO:0046872">
    <property type="term" value="F:metal ion binding"/>
    <property type="evidence" value="ECO:0007669"/>
    <property type="project" value="UniProtKB-KW"/>
</dbReference>
<dbReference type="GO" id="GO:0048039">
    <property type="term" value="F:ubiquinone binding"/>
    <property type="evidence" value="ECO:0000250"/>
    <property type="project" value="UniProtKB"/>
</dbReference>
<dbReference type="GO" id="GO:0006121">
    <property type="term" value="P:mitochondrial electron transport, succinate to ubiquinone"/>
    <property type="evidence" value="ECO:0000318"/>
    <property type="project" value="GO_Central"/>
</dbReference>
<dbReference type="GO" id="GO:0006099">
    <property type="term" value="P:tricarboxylic acid cycle"/>
    <property type="evidence" value="ECO:0000318"/>
    <property type="project" value="GO_Central"/>
</dbReference>
<dbReference type="CDD" id="cd03496">
    <property type="entry name" value="SQR_TypeC_CybS"/>
    <property type="match status" value="1"/>
</dbReference>
<dbReference type="FunFam" id="1.20.1300.10:FF:000009">
    <property type="entry name" value="Succinate dehydrogenase [ubiquinone] cytochrome b small subunit, mitochondrial"/>
    <property type="match status" value="1"/>
</dbReference>
<dbReference type="Gene3D" id="1.20.1300.10">
    <property type="entry name" value="Fumarate reductase/succinate dehydrogenase, transmembrane subunit"/>
    <property type="match status" value="1"/>
</dbReference>
<dbReference type="InterPro" id="IPR007992">
    <property type="entry name" value="CybS"/>
</dbReference>
<dbReference type="InterPro" id="IPR034804">
    <property type="entry name" value="SQR/QFR_C/D"/>
</dbReference>
<dbReference type="PANTHER" id="PTHR13337">
    <property type="entry name" value="SUCCINATE DEHYDROGENASE"/>
    <property type="match status" value="1"/>
</dbReference>
<dbReference type="PANTHER" id="PTHR13337:SF2">
    <property type="entry name" value="SUCCINATE DEHYDROGENASE [UBIQUINONE] CYTOCHROME B SMALL SUBUNIT, MITOCHONDRIAL"/>
    <property type="match status" value="1"/>
</dbReference>
<dbReference type="Pfam" id="PF05328">
    <property type="entry name" value="CybS"/>
    <property type="match status" value="1"/>
</dbReference>
<dbReference type="SUPFAM" id="SSF81343">
    <property type="entry name" value="Fumarate reductase respiratory complex transmembrane subunits"/>
    <property type="match status" value="1"/>
</dbReference>
<accession>Q95123</accession>
<accession>Q3T0U6</accession>
<accession>Q5UAB3</accession>
<sequence>MALWRLSVLCGAREGRALFLRTPVVRPALVSAFLQDRPAQGWCGTQHIHLSPSHHSGSKAASLHWTGERVVSVLLLGLIPAAYLNPCSAMDYSLAATLTLHSHWGIGQVVTDYVHGDAVQKAAKTGLLVLSAFTFAGLCYFNYHDVGICKAVAMLWKL</sequence>
<reference key="1">
    <citation type="journal article" date="1997" name="J. Biol. Chem.">
        <title>The smallest membrane anchoring subunit (QPs3) of bovine heart mitochondrial succinate-ubiquinone reductase. Cloning, sequencing, topology, and Q-binding domain.</title>
        <authorList>
            <person name="Shenoy S.K."/>
            <person name="Yu L."/>
            <person name="Yu C.-A."/>
        </authorList>
    </citation>
    <scope>NUCLEOTIDE SEQUENCE [MRNA]</scope>
    <source>
        <tissue>Heart</tissue>
    </source>
</reference>
<reference key="2">
    <citation type="submission" date="2004-10" db="EMBL/GenBank/DDBJ databases">
        <title>Bovine succinate dehydrogenase complex, subunit D, integral membrane protein (SDHD).</title>
        <authorList>
            <person name="Khatib H."/>
        </authorList>
    </citation>
    <scope>NUCLEOTIDE SEQUENCE [MRNA]</scope>
</reference>
<reference key="3">
    <citation type="submission" date="2005-08" db="EMBL/GenBank/DDBJ databases">
        <authorList>
            <consortium name="NIH - Mammalian Gene Collection (MGC) project"/>
        </authorList>
    </citation>
    <scope>NUCLEOTIDE SEQUENCE [LARGE SCALE MRNA]</scope>
    <source>
        <strain>Crossbred X Angus</strain>
        <tissue>Ileum</tissue>
    </source>
</reference>
<reference key="4">
    <citation type="journal article" date="1988" name="Biochim. Biophys. Acta">
        <title>Oxidation of malate by the mitochondrial succinate-ubiquinone reductase.</title>
        <authorList>
            <person name="Belikova Y.O."/>
            <person name="Kotlyar A.B."/>
            <person name="Vinogradov A.D."/>
        </authorList>
    </citation>
    <scope>FUNCTION</scope>
</reference>
<reference key="5">
    <citation type="journal article" date="1991" name="FEBS Lett.">
        <title>Direct demonstration of enol-oxaloacetate as an immediate product of malate oxidation by the mammalian succinate dehydrogenase.</title>
        <authorList>
            <person name="Panchenko M.V."/>
            <person name="Vinogradov A.D."/>
        </authorList>
    </citation>
    <scope>FUNCTION</scope>
</reference>
<name>DHSD_BOVIN</name>
<proteinExistence type="evidence at transcript level"/>
<protein>
    <recommendedName>
        <fullName>Succinate dehydrogenase [ubiquinone] cytochrome b small subunit, mitochondrial</fullName>
        <shortName>CybS</shortName>
    </recommendedName>
    <alternativeName>
        <fullName>CII-4</fullName>
    </alternativeName>
    <alternativeName>
        <fullName evidence="5">Malate dehydrogenase [quinone] cytochrome b small subunit</fullName>
    </alternativeName>
    <alternativeName>
        <fullName>QPs3</fullName>
    </alternativeName>
    <alternativeName>
        <fullName>Succinate dehydrogenase complex subunit D</fullName>
    </alternativeName>
    <alternativeName>
        <fullName>Succinate-ubiquinone reductase membrane anchor subunit</fullName>
    </alternativeName>
</protein>
<organism>
    <name type="scientific">Bos taurus</name>
    <name type="common">Bovine</name>
    <dbReference type="NCBI Taxonomy" id="9913"/>
    <lineage>
        <taxon>Eukaryota</taxon>
        <taxon>Metazoa</taxon>
        <taxon>Chordata</taxon>
        <taxon>Craniata</taxon>
        <taxon>Vertebrata</taxon>
        <taxon>Euteleostomi</taxon>
        <taxon>Mammalia</taxon>
        <taxon>Eutheria</taxon>
        <taxon>Laurasiatheria</taxon>
        <taxon>Artiodactyla</taxon>
        <taxon>Ruminantia</taxon>
        <taxon>Pecora</taxon>
        <taxon>Bovidae</taxon>
        <taxon>Bovinae</taxon>
        <taxon>Bos</taxon>
    </lineage>
</organism>